<evidence type="ECO:0000250" key="1"/>
<evidence type="ECO:0000269" key="2">
    <source>
    </source>
</evidence>
<evidence type="ECO:0000305" key="3"/>
<accession>Q6NW95</accession>
<accession>F1RCI3</accession>
<organism>
    <name type="scientific">Danio rerio</name>
    <name type="common">Zebrafish</name>
    <name type="synonym">Brachydanio rerio</name>
    <dbReference type="NCBI Taxonomy" id="7955"/>
    <lineage>
        <taxon>Eukaryota</taxon>
        <taxon>Metazoa</taxon>
        <taxon>Chordata</taxon>
        <taxon>Craniata</taxon>
        <taxon>Vertebrata</taxon>
        <taxon>Euteleostomi</taxon>
        <taxon>Actinopterygii</taxon>
        <taxon>Neopterygii</taxon>
        <taxon>Teleostei</taxon>
        <taxon>Ostariophysi</taxon>
        <taxon>Cypriniformes</taxon>
        <taxon>Danionidae</taxon>
        <taxon>Danioninae</taxon>
        <taxon>Danio</taxon>
    </lineage>
</organism>
<gene>
    <name type="primary">fbxl15</name>
    <name type="ORF">zgc:85882</name>
</gene>
<proteinExistence type="evidence at transcript level"/>
<comment type="function">
    <text evidence="1 2">Substrate recognition component of a SCF (SKP1-CUL1-F-box protein) E3 ubiquitin-protein ligase complex which mediates the ubiquitination and subsequent proteasomal degradation of target proteins. Acts as a positive regulator of the BMP signaling pathway (By similarity). Required for dorsal/ventral pattern formation.</text>
</comment>
<comment type="pathway">
    <text>Protein modification; protein ubiquitination.</text>
</comment>
<comment type="subunit">
    <text evidence="1">Part of the SCF (SKP1-CUL1-F-box) E3 ubiquitin-protein ligase complex SCF(FBXL15).</text>
</comment>
<comment type="subcellular location">
    <subcellularLocation>
        <location evidence="1">Cytoplasm</location>
    </subcellularLocation>
</comment>
<comment type="developmental stage">
    <text evidence="2">Maternally expressed. At 24 hours post-fertilization (hpf), expressed mainly in head region.</text>
</comment>
<comment type="similarity">
    <text evidence="3">Belongs to the FBXL15 family.</text>
</comment>
<name>FXL15_DANRE</name>
<feature type="chain" id="PRO_0000410906" description="F-box/LRR-repeat protein 15">
    <location>
        <begin position="1"/>
        <end position="296"/>
    </location>
</feature>
<feature type="domain" description="F-box">
    <location>
        <begin position="16"/>
        <end position="63"/>
    </location>
</feature>
<feature type="repeat" description="LRR 1">
    <location>
        <begin position="138"/>
        <end position="159"/>
    </location>
</feature>
<feature type="repeat" description="LRR 2">
    <location>
        <begin position="164"/>
        <end position="185"/>
    </location>
</feature>
<feature type="repeat" description="LRR 3">
    <location>
        <begin position="190"/>
        <end position="211"/>
    </location>
</feature>
<feature type="repeat" description="LRR 4">
    <location>
        <begin position="216"/>
        <end position="237"/>
    </location>
</feature>
<feature type="repeat" description="LRR 5">
    <location>
        <begin position="242"/>
        <end position="263"/>
    </location>
</feature>
<feature type="sequence conflict" description="In Ref. 2; AAH67674." evidence="3" ref="2">
    <original>V</original>
    <variation>M</variation>
    <location>
        <position position="9"/>
    </location>
</feature>
<sequence>MDQKPDERVQSHRCELLDLPWEDVLVSHVFCHLPLRLLVSLQRVSKSFRSLIQVYLDNCRTFDPAQTGPHIPREAFCSILRHNQVLQHLSVTNCSDWITDTDLLPVIGQNQQLQHVDLRGCAQLSRRALVAVSLSCPRLQHLSLAHCEWVDSLALRSLADHCPMLRSLDLTACRQLKDPAVCYLAGKCPELRALSVAVNANITDTAVEEVAKKCREMERLDLTGCLRVRNEAIRTLAEYCPKLQSLKVNHCHNVTESSLGVLRRRNVEIDVEPPLQRALVLLQDVVGFAPFINLQI</sequence>
<keyword id="KW-0963">Cytoplasm</keyword>
<keyword id="KW-0433">Leucine-rich repeat</keyword>
<keyword id="KW-1185">Reference proteome</keyword>
<keyword id="KW-0677">Repeat</keyword>
<keyword id="KW-0833">Ubl conjugation pathway</keyword>
<dbReference type="EMBL" id="CU469585">
    <property type="status" value="NOT_ANNOTATED_CDS"/>
    <property type="molecule type" value="Genomic_DNA"/>
</dbReference>
<dbReference type="EMBL" id="BC067674">
    <property type="protein sequence ID" value="AAH67674.1"/>
    <property type="molecule type" value="mRNA"/>
</dbReference>
<dbReference type="RefSeq" id="NP_998107.1">
    <property type="nucleotide sequence ID" value="NM_212942.1"/>
</dbReference>
<dbReference type="SMR" id="Q6NW95"/>
<dbReference type="FunCoup" id="Q6NW95">
    <property type="interactions" value="1798"/>
</dbReference>
<dbReference type="STRING" id="7955.ENSDARP00000112101"/>
<dbReference type="PaxDb" id="7955-ENSDARP00000112101"/>
<dbReference type="GeneID" id="405878"/>
<dbReference type="KEGG" id="dre:405878"/>
<dbReference type="AGR" id="ZFIN:ZDB-GENE-040426-2440"/>
<dbReference type="CTD" id="79176"/>
<dbReference type="ZFIN" id="ZDB-GENE-040426-2440">
    <property type="gene designation" value="fbxl15"/>
</dbReference>
<dbReference type="eggNOG" id="KOG1947">
    <property type="taxonomic scope" value="Eukaryota"/>
</dbReference>
<dbReference type="InParanoid" id="Q6NW95"/>
<dbReference type="OrthoDB" id="27842at2759"/>
<dbReference type="Reactome" id="R-DRE-8951664">
    <property type="pathway name" value="Neddylation"/>
</dbReference>
<dbReference type="Reactome" id="R-DRE-983168">
    <property type="pathway name" value="Antigen processing: Ubiquitination &amp; Proteasome degradation"/>
</dbReference>
<dbReference type="UniPathway" id="UPA00143"/>
<dbReference type="PRO" id="PR:Q6NW95"/>
<dbReference type="Proteomes" id="UP000000437">
    <property type="component" value="Chromosome 12"/>
</dbReference>
<dbReference type="GO" id="GO:0005737">
    <property type="term" value="C:cytoplasm"/>
    <property type="evidence" value="ECO:0000250"/>
    <property type="project" value="UniProtKB"/>
</dbReference>
<dbReference type="GO" id="GO:0019005">
    <property type="term" value="C:SCF ubiquitin ligase complex"/>
    <property type="evidence" value="ECO:0000250"/>
    <property type="project" value="UniProtKB"/>
</dbReference>
<dbReference type="GO" id="GO:0030282">
    <property type="term" value="P:bone mineralization"/>
    <property type="evidence" value="ECO:0000250"/>
    <property type="project" value="UniProtKB"/>
</dbReference>
<dbReference type="GO" id="GO:0009953">
    <property type="term" value="P:dorsal/ventral pattern formation"/>
    <property type="evidence" value="ECO:0000315"/>
    <property type="project" value="UniProtKB"/>
</dbReference>
<dbReference type="GO" id="GO:0000086">
    <property type="term" value="P:G2/M transition of mitotic cell cycle"/>
    <property type="evidence" value="ECO:0000250"/>
    <property type="project" value="UniProtKB"/>
</dbReference>
<dbReference type="GO" id="GO:0030513">
    <property type="term" value="P:positive regulation of BMP signaling pathway"/>
    <property type="evidence" value="ECO:0000250"/>
    <property type="project" value="UniProtKB"/>
</dbReference>
<dbReference type="GO" id="GO:0016567">
    <property type="term" value="P:protein ubiquitination"/>
    <property type="evidence" value="ECO:0000250"/>
    <property type="project" value="UniProtKB"/>
</dbReference>
<dbReference type="GO" id="GO:0031146">
    <property type="term" value="P:SCF-dependent proteasomal ubiquitin-dependent protein catabolic process"/>
    <property type="evidence" value="ECO:0000250"/>
    <property type="project" value="UniProtKB"/>
</dbReference>
<dbReference type="CDD" id="cd22126">
    <property type="entry name" value="F-box_FBXL15"/>
    <property type="match status" value="1"/>
</dbReference>
<dbReference type="FunFam" id="3.80.10.10:FF:000113">
    <property type="entry name" value="F-box/LRR-repeat protein 15 isoform X1"/>
    <property type="match status" value="1"/>
</dbReference>
<dbReference type="Gene3D" id="3.80.10.10">
    <property type="entry name" value="Ribonuclease Inhibitor"/>
    <property type="match status" value="1"/>
</dbReference>
<dbReference type="InterPro" id="IPR001810">
    <property type="entry name" value="F-box_dom"/>
</dbReference>
<dbReference type="InterPro" id="IPR006553">
    <property type="entry name" value="Leu-rich_rpt_Cys-con_subtyp"/>
</dbReference>
<dbReference type="InterPro" id="IPR032675">
    <property type="entry name" value="LRR_dom_sf"/>
</dbReference>
<dbReference type="PANTHER" id="PTHR13318">
    <property type="entry name" value="PARTNER OF PAIRED, ISOFORM B-RELATED"/>
    <property type="match status" value="1"/>
</dbReference>
<dbReference type="Pfam" id="PF00646">
    <property type="entry name" value="F-box"/>
    <property type="match status" value="1"/>
</dbReference>
<dbReference type="SMART" id="SM00367">
    <property type="entry name" value="LRR_CC"/>
    <property type="match status" value="6"/>
</dbReference>
<dbReference type="SUPFAM" id="SSF52047">
    <property type="entry name" value="RNI-like"/>
    <property type="match status" value="1"/>
</dbReference>
<reference key="1">
    <citation type="journal article" date="2013" name="Nature">
        <title>The zebrafish reference genome sequence and its relationship to the human genome.</title>
        <authorList>
            <person name="Howe K."/>
            <person name="Clark M.D."/>
            <person name="Torroja C.F."/>
            <person name="Torrance J."/>
            <person name="Berthelot C."/>
            <person name="Muffato M."/>
            <person name="Collins J.E."/>
            <person name="Humphray S."/>
            <person name="McLaren K."/>
            <person name="Matthews L."/>
            <person name="McLaren S."/>
            <person name="Sealy I."/>
            <person name="Caccamo M."/>
            <person name="Churcher C."/>
            <person name="Scott C."/>
            <person name="Barrett J.C."/>
            <person name="Koch R."/>
            <person name="Rauch G.J."/>
            <person name="White S."/>
            <person name="Chow W."/>
            <person name="Kilian B."/>
            <person name="Quintais L.T."/>
            <person name="Guerra-Assuncao J.A."/>
            <person name="Zhou Y."/>
            <person name="Gu Y."/>
            <person name="Yen J."/>
            <person name="Vogel J.H."/>
            <person name="Eyre T."/>
            <person name="Redmond S."/>
            <person name="Banerjee R."/>
            <person name="Chi J."/>
            <person name="Fu B."/>
            <person name="Langley E."/>
            <person name="Maguire S.F."/>
            <person name="Laird G.K."/>
            <person name="Lloyd D."/>
            <person name="Kenyon E."/>
            <person name="Donaldson S."/>
            <person name="Sehra H."/>
            <person name="Almeida-King J."/>
            <person name="Loveland J."/>
            <person name="Trevanion S."/>
            <person name="Jones M."/>
            <person name="Quail M."/>
            <person name="Willey D."/>
            <person name="Hunt A."/>
            <person name="Burton J."/>
            <person name="Sims S."/>
            <person name="McLay K."/>
            <person name="Plumb B."/>
            <person name="Davis J."/>
            <person name="Clee C."/>
            <person name="Oliver K."/>
            <person name="Clark R."/>
            <person name="Riddle C."/>
            <person name="Elliot D."/>
            <person name="Threadgold G."/>
            <person name="Harden G."/>
            <person name="Ware D."/>
            <person name="Begum S."/>
            <person name="Mortimore B."/>
            <person name="Kerry G."/>
            <person name="Heath P."/>
            <person name="Phillimore B."/>
            <person name="Tracey A."/>
            <person name="Corby N."/>
            <person name="Dunn M."/>
            <person name="Johnson C."/>
            <person name="Wood J."/>
            <person name="Clark S."/>
            <person name="Pelan S."/>
            <person name="Griffiths G."/>
            <person name="Smith M."/>
            <person name="Glithero R."/>
            <person name="Howden P."/>
            <person name="Barker N."/>
            <person name="Lloyd C."/>
            <person name="Stevens C."/>
            <person name="Harley J."/>
            <person name="Holt K."/>
            <person name="Panagiotidis G."/>
            <person name="Lovell J."/>
            <person name="Beasley H."/>
            <person name="Henderson C."/>
            <person name="Gordon D."/>
            <person name="Auger K."/>
            <person name="Wright D."/>
            <person name="Collins J."/>
            <person name="Raisen C."/>
            <person name="Dyer L."/>
            <person name="Leung K."/>
            <person name="Robertson L."/>
            <person name="Ambridge K."/>
            <person name="Leongamornlert D."/>
            <person name="McGuire S."/>
            <person name="Gilderthorp R."/>
            <person name="Griffiths C."/>
            <person name="Manthravadi D."/>
            <person name="Nichol S."/>
            <person name="Barker G."/>
            <person name="Whitehead S."/>
            <person name="Kay M."/>
            <person name="Brown J."/>
            <person name="Murnane C."/>
            <person name="Gray E."/>
            <person name="Humphries M."/>
            <person name="Sycamore N."/>
            <person name="Barker D."/>
            <person name="Saunders D."/>
            <person name="Wallis J."/>
            <person name="Babbage A."/>
            <person name="Hammond S."/>
            <person name="Mashreghi-Mohammadi M."/>
            <person name="Barr L."/>
            <person name="Martin S."/>
            <person name="Wray P."/>
            <person name="Ellington A."/>
            <person name="Matthews N."/>
            <person name="Ellwood M."/>
            <person name="Woodmansey R."/>
            <person name="Clark G."/>
            <person name="Cooper J."/>
            <person name="Tromans A."/>
            <person name="Grafham D."/>
            <person name="Skuce C."/>
            <person name="Pandian R."/>
            <person name="Andrews R."/>
            <person name="Harrison E."/>
            <person name="Kimberley A."/>
            <person name="Garnett J."/>
            <person name="Fosker N."/>
            <person name="Hall R."/>
            <person name="Garner P."/>
            <person name="Kelly D."/>
            <person name="Bird C."/>
            <person name="Palmer S."/>
            <person name="Gehring I."/>
            <person name="Berger A."/>
            <person name="Dooley C.M."/>
            <person name="Ersan-Urun Z."/>
            <person name="Eser C."/>
            <person name="Geiger H."/>
            <person name="Geisler M."/>
            <person name="Karotki L."/>
            <person name="Kirn A."/>
            <person name="Konantz J."/>
            <person name="Konantz M."/>
            <person name="Oberlander M."/>
            <person name="Rudolph-Geiger S."/>
            <person name="Teucke M."/>
            <person name="Lanz C."/>
            <person name="Raddatz G."/>
            <person name="Osoegawa K."/>
            <person name="Zhu B."/>
            <person name="Rapp A."/>
            <person name="Widaa S."/>
            <person name="Langford C."/>
            <person name="Yang F."/>
            <person name="Schuster S.C."/>
            <person name="Carter N.P."/>
            <person name="Harrow J."/>
            <person name="Ning Z."/>
            <person name="Herrero J."/>
            <person name="Searle S.M."/>
            <person name="Enright A."/>
            <person name="Geisler R."/>
            <person name="Plasterk R.H."/>
            <person name="Lee C."/>
            <person name="Westerfield M."/>
            <person name="de Jong P.J."/>
            <person name="Zon L.I."/>
            <person name="Postlethwait J.H."/>
            <person name="Nusslein-Volhard C."/>
            <person name="Hubbard T.J."/>
            <person name="Roest Crollius H."/>
            <person name="Rogers J."/>
            <person name="Stemple D.L."/>
        </authorList>
    </citation>
    <scope>NUCLEOTIDE SEQUENCE [LARGE SCALE GENOMIC DNA]</scope>
    <source>
        <strain>Tuebingen</strain>
    </source>
</reference>
<reference key="2">
    <citation type="submission" date="2004-03" db="EMBL/GenBank/DDBJ databases">
        <authorList>
            <consortium name="NIH - Zebrafish Gene Collection (ZGC) project"/>
        </authorList>
    </citation>
    <scope>NUCLEOTIDE SEQUENCE [LARGE SCALE MRNA]</scope>
    <source>
        <tissue>Embryo</tissue>
    </source>
</reference>
<reference key="3">
    <citation type="journal article" date="2011" name="EMBO J.">
        <title>SCF(FBXL15) regulates BMP signalling by directing the degradation of HECT-type ubiquitin ligase Smurf1.</title>
        <authorList>
            <person name="Cui Y."/>
            <person name="He S."/>
            <person name="Xing C."/>
            <person name="Lu K."/>
            <person name="Wang J."/>
            <person name="Xing G."/>
            <person name="Meng A."/>
            <person name="Jia S."/>
            <person name="He F."/>
            <person name="Zhang L."/>
        </authorList>
    </citation>
    <scope>FUNCTION</scope>
    <scope>DEVELOPMENTAL STAGE</scope>
</reference>
<protein>
    <recommendedName>
        <fullName>F-box/LRR-repeat protein 15</fullName>
    </recommendedName>
</protein>